<gene>
    <name type="primary">GTG1</name>
    <name type="ordered locus">At1g64990</name>
    <name type="ORF">F13O11.29</name>
</gene>
<organism>
    <name type="scientific">Arabidopsis thaliana</name>
    <name type="common">Mouse-ear cress</name>
    <dbReference type="NCBI Taxonomy" id="3702"/>
    <lineage>
        <taxon>Eukaryota</taxon>
        <taxon>Viridiplantae</taxon>
        <taxon>Streptophyta</taxon>
        <taxon>Embryophyta</taxon>
        <taxon>Tracheophyta</taxon>
        <taxon>Spermatophyta</taxon>
        <taxon>Magnoliopsida</taxon>
        <taxon>eudicotyledons</taxon>
        <taxon>Gunneridae</taxon>
        <taxon>Pentapetalae</taxon>
        <taxon>rosids</taxon>
        <taxon>malvids</taxon>
        <taxon>Brassicales</taxon>
        <taxon>Brassicaceae</taxon>
        <taxon>Camelineae</taxon>
        <taxon>Arabidopsis</taxon>
    </lineage>
</organism>
<comment type="function">
    <text evidence="2 3">Abscisic acid receptor. The GDP-bound form exhibits greater abscisic acid binding than the GTP-bound form (PubMed:19135895). Required for seedling growth and fertility (PubMed:23001037).</text>
</comment>
<comment type="activity regulation">
    <text>The GTPase activity is Mg(2+) dependent and is strongly inhibited by the interaction with GPA1.</text>
</comment>
<comment type="subunit">
    <text evidence="2">Interacts with GPA1.</text>
</comment>
<comment type="interaction">
    <interactant intactId="EBI-2214605">
        <id>Q9XIP7</id>
    </interactant>
    <interactant intactId="EBI-443890">
        <id>P18064</id>
        <label>GPA1</label>
    </interactant>
    <organismsDiffer>false</organismsDiffer>
    <experiments>2</experiments>
</comment>
<comment type="subcellular location">
    <subcellularLocation>
        <location evidence="2">Cell membrane</location>
        <topology evidence="1">Multi-pass membrane protein</topology>
    </subcellularLocation>
    <subcellularLocation>
        <location evidence="3">Golgi apparatus membrane</location>
        <topology evidence="1">Multi-pass membrane protein</topology>
    </subcellularLocation>
    <subcellularLocation>
        <location evidence="3">Endoplasmic reticulum membrane</location>
        <topology evidence="1">Multi-pass membrane protein</topology>
    </subcellularLocation>
</comment>
<comment type="tissue specificity">
    <text evidence="2">Expressed in cotyledons, leaves, stems, roots, flowers and guard cells.</text>
</comment>
<comment type="induction">
    <text evidence="2">Not induced by abscisic acid, cold, salt or drought treatments.</text>
</comment>
<comment type="disruption phenotype">
    <text evidence="2">No visible phenotype; due to the redundancy with GTG2. The double mutants gtg1 and gtg2 are hyposensitive to abscisic acid.</text>
</comment>
<comment type="miscellaneous">
    <text>Has both a topology similar to GPCRs and a GTP-binding/GTPase activity.</text>
</comment>
<comment type="similarity">
    <text evidence="4">Belongs to the Golgi pH regulator (TC 1.A.38) family.</text>
</comment>
<name>GTG1_ARATH</name>
<reference key="1">
    <citation type="journal article" date="2012" name="Plant Cell">
        <title>G protein-coupled receptor-type G proteins are required for light-dependent seedling growth and fertility in Arabidopsis.</title>
        <authorList>
            <person name="Jaffe F.W."/>
            <person name="Freschet G.E."/>
            <person name="Valdes B.M."/>
            <person name="Runions J."/>
            <person name="Terry M.J."/>
            <person name="Williams L.E."/>
        </authorList>
    </citation>
    <scope>NUCLEOTIDE SEQUENCE [MRNA]</scope>
    <scope>FUNCTION</scope>
    <scope>SUBCELLULAR LOCATION</scope>
</reference>
<reference key="2">
    <citation type="journal article" date="2000" name="Nature">
        <title>Sequence and analysis of chromosome 1 of the plant Arabidopsis thaliana.</title>
        <authorList>
            <person name="Theologis A."/>
            <person name="Ecker J.R."/>
            <person name="Palm C.J."/>
            <person name="Federspiel N.A."/>
            <person name="Kaul S."/>
            <person name="White O."/>
            <person name="Alonso J."/>
            <person name="Altafi H."/>
            <person name="Araujo R."/>
            <person name="Bowman C.L."/>
            <person name="Brooks S.Y."/>
            <person name="Buehler E."/>
            <person name="Chan A."/>
            <person name="Chao Q."/>
            <person name="Chen H."/>
            <person name="Cheuk R.F."/>
            <person name="Chin C.W."/>
            <person name="Chung M.K."/>
            <person name="Conn L."/>
            <person name="Conway A.B."/>
            <person name="Conway A.R."/>
            <person name="Creasy T.H."/>
            <person name="Dewar K."/>
            <person name="Dunn P."/>
            <person name="Etgu P."/>
            <person name="Feldblyum T.V."/>
            <person name="Feng J.-D."/>
            <person name="Fong B."/>
            <person name="Fujii C.Y."/>
            <person name="Gill J.E."/>
            <person name="Goldsmith A.D."/>
            <person name="Haas B."/>
            <person name="Hansen N.F."/>
            <person name="Hughes B."/>
            <person name="Huizar L."/>
            <person name="Hunter J.L."/>
            <person name="Jenkins J."/>
            <person name="Johnson-Hopson C."/>
            <person name="Khan S."/>
            <person name="Khaykin E."/>
            <person name="Kim C.J."/>
            <person name="Koo H.L."/>
            <person name="Kremenetskaia I."/>
            <person name="Kurtz D.B."/>
            <person name="Kwan A."/>
            <person name="Lam B."/>
            <person name="Langin-Hooper S."/>
            <person name="Lee A."/>
            <person name="Lee J.M."/>
            <person name="Lenz C.A."/>
            <person name="Li J.H."/>
            <person name="Li Y.-P."/>
            <person name="Lin X."/>
            <person name="Liu S.X."/>
            <person name="Liu Z.A."/>
            <person name="Luros J.S."/>
            <person name="Maiti R."/>
            <person name="Marziali A."/>
            <person name="Militscher J."/>
            <person name="Miranda M."/>
            <person name="Nguyen M."/>
            <person name="Nierman W.C."/>
            <person name="Osborne B.I."/>
            <person name="Pai G."/>
            <person name="Peterson J."/>
            <person name="Pham P.K."/>
            <person name="Rizzo M."/>
            <person name="Rooney T."/>
            <person name="Rowley D."/>
            <person name="Sakano H."/>
            <person name="Salzberg S.L."/>
            <person name="Schwartz J.R."/>
            <person name="Shinn P."/>
            <person name="Southwick A.M."/>
            <person name="Sun H."/>
            <person name="Tallon L.J."/>
            <person name="Tambunga G."/>
            <person name="Toriumi M.J."/>
            <person name="Town C.D."/>
            <person name="Utterback T."/>
            <person name="Van Aken S."/>
            <person name="Vaysberg M."/>
            <person name="Vysotskaia V.S."/>
            <person name="Walker M."/>
            <person name="Wu D."/>
            <person name="Yu G."/>
            <person name="Fraser C.M."/>
            <person name="Venter J.C."/>
            <person name="Davis R.W."/>
        </authorList>
    </citation>
    <scope>NUCLEOTIDE SEQUENCE [LARGE SCALE GENOMIC DNA]</scope>
    <source>
        <strain>cv. Columbia</strain>
    </source>
</reference>
<reference key="3">
    <citation type="journal article" date="2017" name="Plant J.">
        <title>Araport11: a complete reannotation of the Arabidopsis thaliana reference genome.</title>
        <authorList>
            <person name="Cheng C.Y."/>
            <person name="Krishnakumar V."/>
            <person name="Chan A.P."/>
            <person name="Thibaud-Nissen F."/>
            <person name="Schobel S."/>
            <person name="Town C.D."/>
        </authorList>
    </citation>
    <scope>GENOME REANNOTATION</scope>
    <source>
        <strain>cv. Columbia</strain>
    </source>
</reference>
<reference key="4">
    <citation type="journal article" date="2003" name="Science">
        <title>Empirical analysis of transcriptional activity in the Arabidopsis genome.</title>
        <authorList>
            <person name="Yamada K."/>
            <person name="Lim J."/>
            <person name="Dale J.M."/>
            <person name="Chen H."/>
            <person name="Shinn P."/>
            <person name="Palm C.J."/>
            <person name="Southwick A.M."/>
            <person name="Wu H.C."/>
            <person name="Kim C.J."/>
            <person name="Nguyen M."/>
            <person name="Pham P.K."/>
            <person name="Cheuk R.F."/>
            <person name="Karlin-Newmann G."/>
            <person name="Liu S.X."/>
            <person name="Lam B."/>
            <person name="Sakano H."/>
            <person name="Wu T."/>
            <person name="Yu G."/>
            <person name="Miranda M."/>
            <person name="Quach H.L."/>
            <person name="Tripp M."/>
            <person name="Chang C.H."/>
            <person name="Lee J.M."/>
            <person name="Toriumi M.J."/>
            <person name="Chan M.M."/>
            <person name="Tang C.C."/>
            <person name="Onodera C.S."/>
            <person name="Deng J.M."/>
            <person name="Akiyama K."/>
            <person name="Ansari Y."/>
            <person name="Arakawa T."/>
            <person name="Banh J."/>
            <person name="Banno F."/>
            <person name="Bowser L."/>
            <person name="Brooks S.Y."/>
            <person name="Carninci P."/>
            <person name="Chao Q."/>
            <person name="Choy N."/>
            <person name="Enju A."/>
            <person name="Goldsmith A.D."/>
            <person name="Gurjal M."/>
            <person name="Hansen N.F."/>
            <person name="Hayashizaki Y."/>
            <person name="Johnson-Hopson C."/>
            <person name="Hsuan V.W."/>
            <person name="Iida K."/>
            <person name="Karnes M."/>
            <person name="Khan S."/>
            <person name="Koesema E."/>
            <person name="Ishida J."/>
            <person name="Jiang P.X."/>
            <person name="Jones T."/>
            <person name="Kawai J."/>
            <person name="Kamiya A."/>
            <person name="Meyers C."/>
            <person name="Nakajima M."/>
            <person name="Narusaka M."/>
            <person name="Seki M."/>
            <person name="Sakurai T."/>
            <person name="Satou M."/>
            <person name="Tamse R."/>
            <person name="Vaysberg M."/>
            <person name="Wallender E.K."/>
            <person name="Wong C."/>
            <person name="Yamamura Y."/>
            <person name="Yuan S."/>
            <person name="Shinozaki K."/>
            <person name="Davis R.W."/>
            <person name="Theologis A."/>
            <person name="Ecker J.R."/>
        </authorList>
    </citation>
    <scope>NUCLEOTIDE SEQUENCE [LARGE SCALE MRNA]</scope>
    <source>
        <strain>cv. Columbia</strain>
    </source>
</reference>
<reference key="5">
    <citation type="journal article" date="2009" name="Cell">
        <title>Two novel GPCR-type G proteins are abscisic acid receptors in Arabidopsis.</title>
        <authorList>
            <person name="Pandey S."/>
            <person name="Nelson D.C."/>
            <person name="Assmann S.M."/>
        </authorList>
    </citation>
    <scope>FUNCTION</scope>
    <scope>TISSUE SPECIFICITY</scope>
    <scope>SUBCELLULAR LOCATION</scope>
    <scope>INDUCTION</scope>
    <scope>INTERACTION WITH GPA1</scope>
    <scope>DISRUPTION PHENOTYPE</scope>
</reference>
<accession>Q9XIP7</accession>
<accession>G0WVT6</accession>
<evidence type="ECO:0000255" key="1"/>
<evidence type="ECO:0000269" key="2">
    <source>
    </source>
</evidence>
<evidence type="ECO:0000269" key="3">
    <source>
    </source>
</evidence>
<evidence type="ECO:0000305" key="4"/>
<keyword id="KW-1003">Cell membrane</keyword>
<keyword id="KW-0175">Coiled coil</keyword>
<keyword id="KW-0256">Endoplasmic reticulum</keyword>
<keyword id="KW-0333">Golgi apparatus</keyword>
<keyword id="KW-0342">GTP-binding</keyword>
<keyword id="KW-0472">Membrane</keyword>
<keyword id="KW-0547">Nucleotide-binding</keyword>
<keyword id="KW-0675">Receptor</keyword>
<keyword id="KW-1185">Reference proteome</keyword>
<keyword id="KW-0812">Transmembrane</keyword>
<keyword id="KW-1133">Transmembrane helix</keyword>
<protein>
    <recommendedName>
        <fullName>GPCR-type G protein 1</fullName>
    </recommendedName>
</protein>
<feature type="chain" id="PRO_0000367058" description="GPCR-type G protein 1">
    <location>
        <begin position="1"/>
        <end position="468"/>
    </location>
</feature>
<feature type="transmembrane region" description="Helical" evidence="1">
    <location>
        <begin position="7"/>
        <end position="27"/>
    </location>
</feature>
<feature type="transmembrane region" description="Helical" evidence="1">
    <location>
        <begin position="45"/>
        <end position="65"/>
    </location>
</feature>
<feature type="transmembrane region" description="Helical" evidence="1">
    <location>
        <begin position="82"/>
        <end position="102"/>
    </location>
</feature>
<feature type="transmembrane region" description="Helical" evidence="1">
    <location>
        <begin position="114"/>
        <end position="134"/>
    </location>
</feature>
<feature type="transmembrane region" description="Helical" evidence="1">
    <location>
        <begin position="153"/>
        <end position="173"/>
    </location>
</feature>
<feature type="transmembrane region" description="Helical" evidence="1">
    <location>
        <begin position="297"/>
        <end position="319"/>
    </location>
</feature>
<feature type="transmembrane region" description="Helical" evidence="1">
    <location>
        <begin position="345"/>
        <end position="365"/>
    </location>
</feature>
<feature type="transmembrane region" description="Helical" evidence="1">
    <location>
        <begin position="389"/>
        <end position="409"/>
    </location>
</feature>
<feature type="transmembrane region" description="Helical" evidence="1">
    <location>
        <begin position="437"/>
        <end position="457"/>
    </location>
</feature>
<feature type="coiled-coil region" evidence="1">
    <location>
        <begin position="243"/>
        <end position="279"/>
    </location>
</feature>
<feature type="binding site" evidence="4">
    <location>
        <begin position="382"/>
        <end position="411"/>
    </location>
    <ligand>
        <name>GTP</name>
        <dbReference type="ChEBI" id="CHEBI:37565"/>
    </ligand>
</feature>
<sequence>MSYGWAIYEGTVVIASLSLLGWAGLWFLNRRLYKEYEEKRALVQIIFSVVFAFSCNLLQLVLFEIIPVLSREARMINWKVDLFCLILLLVFMLPYYHCYLMLRNSGVRRERASVGAFLFLSAFLYAFWRMGVHFPMPSADKGFFTMPQLVSRIGVIGVTLMAVLSGFGAVNLPYSYISLFIREIEEADIISLERQLIQSTETCIAKKKKIILCQLEVERNQGSEENQKRSSFFRRIVGTVVRSVQDDQKEQDIKILEAEVEALEELSKQLFLEVYELRQAKDAAAYSRTWKGHVQNLLGYACSIYCVYKMLKSLQSVVFKEAGTKDPVTTMISIFLRLFDIGVDAALLSQYISLLFIGMLIVISVRGFLTNLMKFFFAVSRVGSGSSSNVVLFLSEIMGMYFLSSILLIRKSLRNEYRGIITDVLGGDIQFDFYHRWFDAIFVASAFLSLVLLSAHYTSRQSDKHAIE</sequence>
<proteinExistence type="evidence at protein level"/>
<dbReference type="EMBL" id="HM776216">
    <property type="protein sequence ID" value="AEF15911.1"/>
    <property type="molecule type" value="mRNA"/>
</dbReference>
<dbReference type="EMBL" id="AC006193">
    <property type="protein sequence ID" value="AAD38272.1"/>
    <property type="molecule type" value="Genomic_DNA"/>
</dbReference>
<dbReference type="EMBL" id="CP002684">
    <property type="protein sequence ID" value="AEE34312.1"/>
    <property type="molecule type" value="Genomic_DNA"/>
</dbReference>
<dbReference type="EMBL" id="CP002684">
    <property type="protein sequence ID" value="AEE34313.1"/>
    <property type="molecule type" value="Genomic_DNA"/>
</dbReference>
<dbReference type="EMBL" id="AY070446">
    <property type="protein sequence ID" value="AAL49849.1"/>
    <property type="molecule type" value="mRNA"/>
</dbReference>
<dbReference type="PIR" id="E96673">
    <property type="entry name" value="E96673"/>
</dbReference>
<dbReference type="RefSeq" id="NP_001031235.1">
    <property type="nucleotide sequence ID" value="NM_001036158.2"/>
</dbReference>
<dbReference type="RefSeq" id="NP_176679.2">
    <property type="nucleotide sequence ID" value="NM_105173.4"/>
</dbReference>
<dbReference type="SMR" id="Q9XIP7"/>
<dbReference type="BioGRID" id="28028">
    <property type="interactions" value="1"/>
</dbReference>
<dbReference type="FunCoup" id="Q9XIP7">
    <property type="interactions" value="3337"/>
</dbReference>
<dbReference type="IntAct" id="Q9XIP7">
    <property type="interactions" value="1"/>
</dbReference>
<dbReference type="STRING" id="3702.Q9XIP7"/>
<dbReference type="PaxDb" id="3702-AT1G64990.2"/>
<dbReference type="ProteomicsDB" id="247346"/>
<dbReference type="EnsemblPlants" id="AT1G64990.1">
    <property type="protein sequence ID" value="AT1G64990.1"/>
    <property type="gene ID" value="AT1G64990"/>
</dbReference>
<dbReference type="EnsemblPlants" id="AT1G64990.2">
    <property type="protein sequence ID" value="AT1G64990.2"/>
    <property type="gene ID" value="AT1G64990"/>
</dbReference>
<dbReference type="GeneID" id="842807"/>
<dbReference type="Gramene" id="AT1G64990.1">
    <property type="protein sequence ID" value="AT1G64990.1"/>
    <property type="gene ID" value="AT1G64990"/>
</dbReference>
<dbReference type="Gramene" id="AT1G64990.2">
    <property type="protein sequence ID" value="AT1G64990.2"/>
    <property type="gene ID" value="AT1G64990"/>
</dbReference>
<dbReference type="KEGG" id="ath:AT1G64990"/>
<dbReference type="Araport" id="AT1G64990"/>
<dbReference type="TAIR" id="AT1G64990">
    <property type="gene designation" value="GTG1"/>
</dbReference>
<dbReference type="eggNOG" id="KOG2417">
    <property type="taxonomic scope" value="Eukaryota"/>
</dbReference>
<dbReference type="HOGENOM" id="CLU_030540_1_0_1"/>
<dbReference type="InParanoid" id="Q9XIP7"/>
<dbReference type="OMA" id="IEIGVHW"/>
<dbReference type="PhylomeDB" id="Q9XIP7"/>
<dbReference type="PRO" id="PR:Q9XIP7"/>
<dbReference type="Proteomes" id="UP000006548">
    <property type="component" value="Chromosome 1"/>
</dbReference>
<dbReference type="ExpressionAtlas" id="Q9XIP7">
    <property type="expression patterns" value="baseline and differential"/>
</dbReference>
<dbReference type="GO" id="GO:0005789">
    <property type="term" value="C:endoplasmic reticulum membrane"/>
    <property type="evidence" value="ECO:0007669"/>
    <property type="project" value="UniProtKB-SubCell"/>
</dbReference>
<dbReference type="GO" id="GO:0000139">
    <property type="term" value="C:Golgi membrane"/>
    <property type="evidence" value="ECO:0007669"/>
    <property type="project" value="UniProtKB-SubCell"/>
</dbReference>
<dbReference type="GO" id="GO:0043231">
    <property type="term" value="C:intracellular membrane-bounded organelle"/>
    <property type="evidence" value="ECO:0000314"/>
    <property type="project" value="TAIR"/>
</dbReference>
<dbReference type="GO" id="GO:0005886">
    <property type="term" value="C:plasma membrane"/>
    <property type="evidence" value="ECO:0000304"/>
    <property type="project" value="TAIR"/>
</dbReference>
<dbReference type="GO" id="GO:0010427">
    <property type="term" value="F:abscisic acid binding"/>
    <property type="evidence" value="ECO:0000314"/>
    <property type="project" value="TAIR"/>
</dbReference>
<dbReference type="GO" id="GO:0005525">
    <property type="term" value="F:GTP binding"/>
    <property type="evidence" value="ECO:0000314"/>
    <property type="project" value="TAIR"/>
</dbReference>
<dbReference type="GO" id="GO:0051020">
    <property type="term" value="F:GTPase binding"/>
    <property type="evidence" value="ECO:0000353"/>
    <property type="project" value="TAIR"/>
</dbReference>
<dbReference type="GO" id="GO:0009791">
    <property type="term" value="P:post-embryonic development"/>
    <property type="evidence" value="ECO:0000316"/>
    <property type="project" value="TAIR"/>
</dbReference>
<dbReference type="GO" id="GO:0009737">
    <property type="term" value="P:response to abscisic acid"/>
    <property type="evidence" value="ECO:0000316"/>
    <property type="project" value="TAIR"/>
</dbReference>
<dbReference type="GO" id="GO:0010228">
    <property type="term" value="P:vegetative to reproductive phase transition of meristem"/>
    <property type="evidence" value="ECO:0000316"/>
    <property type="project" value="TAIR"/>
</dbReference>
<dbReference type="InterPro" id="IPR025969">
    <property type="entry name" value="ABA_GPCR_dom"/>
</dbReference>
<dbReference type="InterPro" id="IPR022535">
    <property type="entry name" value="Golgi_pH-regulator_cons_dom"/>
</dbReference>
<dbReference type="InterPro" id="IPR015672">
    <property type="entry name" value="GPHR/GTG"/>
</dbReference>
<dbReference type="PANTHER" id="PTHR15948">
    <property type="entry name" value="G-PROTEIN COUPLED RECEPTOR 89-RELATED"/>
    <property type="match status" value="1"/>
</dbReference>
<dbReference type="PANTHER" id="PTHR15948:SF0">
    <property type="entry name" value="GOLGI PH REGULATOR A-RELATED"/>
    <property type="match status" value="1"/>
</dbReference>
<dbReference type="Pfam" id="PF12430">
    <property type="entry name" value="ABA_GPCR"/>
    <property type="match status" value="1"/>
</dbReference>
<dbReference type="Pfam" id="PF12537">
    <property type="entry name" value="GPHR_N"/>
    <property type="match status" value="1"/>
</dbReference>
<dbReference type="PROSITE" id="PS00107">
    <property type="entry name" value="PROTEIN_KINASE_ATP"/>
    <property type="match status" value="1"/>
</dbReference>